<proteinExistence type="evidence at protein level"/>
<gene>
    <name type="primary">HBA</name>
</gene>
<accession>P68237</accession>
<accession>P07423</accession>
<keyword id="KW-0007">Acetylation</keyword>
<keyword id="KW-0903">Direct protein sequencing</keyword>
<keyword id="KW-0349">Heme</keyword>
<keyword id="KW-0408">Iron</keyword>
<keyword id="KW-0479">Metal-binding</keyword>
<keyword id="KW-0561">Oxygen transport</keyword>
<keyword id="KW-0597">Phosphoprotein</keyword>
<keyword id="KW-0813">Transport</keyword>
<sequence length="142" mass="15241">MVLSPADKSNVKATWDKIGSHAGEYGGEALERTFASFPTTKTYFPHFDLSPGSAQVKAHGKKVADALTTAAGHLDDLPGALSALSDLHAHKLRVDPVNFKFLSHCLLVTLASHHPAEFTPAVHASLDKFFSAVSTVLTSKYR</sequence>
<feature type="initiator methionine" description="Removed" evidence="3">
    <location>
        <position position="1"/>
    </location>
</feature>
<feature type="chain" id="PRO_0000052799" description="Hemoglobin subunit alpha">
    <location>
        <begin position="2"/>
        <end position="142"/>
    </location>
</feature>
<feature type="peptide" id="PRO_0000455958" description="Hemopressin" evidence="2">
    <location>
        <begin position="96"/>
        <end position="104"/>
    </location>
</feature>
<feature type="domain" description="Globin" evidence="5">
    <location>
        <begin position="2"/>
        <end position="142"/>
    </location>
</feature>
<feature type="binding site" evidence="5">
    <location>
        <position position="59"/>
    </location>
    <ligand>
        <name>O2</name>
        <dbReference type="ChEBI" id="CHEBI:15379"/>
    </ligand>
</feature>
<feature type="binding site" description="proximal binding residue" evidence="5">
    <location>
        <position position="88"/>
    </location>
    <ligand>
        <name>heme b</name>
        <dbReference type="ChEBI" id="CHEBI:60344"/>
    </ligand>
    <ligandPart>
        <name>Fe</name>
        <dbReference type="ChEBI" id="CHEBI:18248"/>
    </ligandPart>
</feature>
<feature type="modified residue" description="Phosphoserine" evidence="4">
    <location>
        <position position="4"/>
    </location>
</feature>
<feature type="modified residue" description="N6-succinyllysine" evidence="1">
    <location>
        <position position="8"/>
    </location>
</feature>
<feature type="modified residue" description="N6-succinyllysine" evidence="1">
    <location>
        <position position="12"/>
    </location>
</feature>
<feature type="modified residue" description="N6-acetyllysine; alternate" evidence="4">
    <location>
        <position position="17"/>
    </location>
</feature>
<feature type="modified residue" description="N6-succinyllysine; alternate" evidence="1">
    <location>
        <position position="17"/>
    </location>
</feature>
<feature type="modified residue" description="Phosphotyrosine" evidence="4">
    <location>
        <position position="25"/>
    </location>
</feature>
<feature type="modified residue" description="Phosphoserine" evidence="4">
    <location>
        <position position="36"/>
    </location>
</feature>
<feature type="modified residue" description="N6-succinyllysine" evidence="1">
    <location>
        <position position="41"/>
    </location>
</feature>
<feature type="modified residue" description="Phosphoserine" evidence="4">
    <location>
        <position position="50"/>
    </location>
</feature>
<feature type="modified residue" description="Phosphoserine" evidence="1">
    <location>
        <position position="103"/>
    </location>
</feature>
<feature type="modified residue" description="Phosphothreonine" evidence="1">
    <location>
        <position position="109"/>
    </location>
</feature>
<feature type="modified residue" description="Phosphoserine" evidence="1">
    <location>
        <position position="125"/>
    </location>
</feature>
<feature type="modified residue" description="Phosphothreonine" evidence="1">
    <location>
        <position position="135"/>
    </location>
</feature>
<feature type="modified residue" description="Phosphothreonine" evidence="1">
    <location>
        <position position="138"/>
    </location>
</feature>
<feature type="modified residue" description="Phosphoserine" evidence="1">
    <location>
        <position position="139"/>
    </location>
</feature>
<organism>
    <name type="scientific">Helarctos malayanus</name>
    <name type="common">Malayan sun bear</name>
    <name type="synonym">Ursus malayanus</name>
    <dbReference type="NCBI Taxonomy" id="9634"/>
    <lineage>
        <taxon>Eukaryota</taxon>
        <taxon>Metazoa</taxon>
        <taxon>Chordata</taxon>
        <taxon>Craniata</taxon>
        <taxon>Vertebrata</taxon>
        <taxon>Euteleostomi</taxon>
        <taxon>Mammalia</taxon>
        <taxon>Eutheria</taxon>
        <taxon>Laurasiatheria</taxon>
        <taxon>Carnivora</taxon>
        <taxon>Caniformia</taxon>
        <taxon>Ursidae</taxon>
        <taxon>Helarctos</taxon>
    </lineage>
</organism>
<comment type="function">
    <text>Involved in oxygen transport from the lung to the various peripheral tissues.</text>
</comment>
<comment type="function">
    <molecule>Hemopressin</molecule>
    <text evidence="2">Hemopressin acts as an antagonist peptide of the cannabinoid receptor CNR1. Hemopressin-binding efficiently blocks cannabinoid receptor CNR1 and subsequent signaling.</text>
</comment>
<comment type="subunit">
    <text>Heterotetramer of two alpha chains and two beta chains.</text>
</comment>
<comment type="tissue specificity">
    <text>Red blood cells.</text>
</comment>
<comment type="similarity">
    <text evidence="5">Belongs to the globin family.</text>
</comment>
<dbReference type="PIR" id="A26539">
    <property type="entry name" value="A26539"/>
</dbReference>
<dbReference type="SMR" id="P68237"/>
<dbReference type="GO" id="GO:0072562">
    <property type="term" value="C:blood microparticle"/>
    <property type="evidence" value="ECO:0007669"/>
    <property type="project" value="TreeGrafter"/>
</dbReference>
<dbReference type="GO" id="GO:0031838">
    <property type="term" value="C:haptoglobin-hemoglobin complex"/>
    <property type="evidence" value="ECO:0007669"/>
    <property type="project" value="TreeGrafter"/>
</dbReference>
<dbReference type="GO" id="GO:0005833">
    <property type="term" value="C:hemoglobin complex"/>
    <property type="evidence" value="ECO:0007669"/>
    <property type="project" value="InterPro"/>
</dbReference>
<dbReference type="GO" id="GO:0031720">
    <property type="term" value="F:haptoglobin binding"/>
    <property type="evidence" value="ECO:0007669"/>
    <property type="project" value="TreeGrafter"/>
</dbReference>
<dbReference type="GO" id="GO:0020037">
    <property type="term" value="F:heme binding"/>
    <property type="evidence" value="ECO:0007669"/>
    <property type="project" value="InterPro"/>
</dbReference>
<dbReference type="GO" id="GO:0005506">
    <property type="term" value="F:iron ion binding"/>
    <property type="evidence" value="ECO:0007669"/>
    <property type="project" value="InterPro"/>
</dbReference>
<dbReference type="GO" id="GO:0043177">
    <property type="term" value="F:organic acid binding"/>
    <property type="evidence" value="ECO:0007669"/>
    <property type="project" value="TreeGrafter"/>
</dbReference>
<dbReference type="GO" id="GO:0019825">
    <property type="term" value="F:oxygen binding"/>
    <property type="evidence" value="ECO:0007669"/>
    <property type="project" value="InterPro"/>
</dbReference>
<dbReference type="GO" id="GO:0005344">
    <property type="term" value="F:oxygen carrier activity"/>
    <property type="evidence" value="ECO:0007669"/>
    <property type="project" value="UniProtKB-KW"/>
</dbReference>
<dbReference type="GO" id="GO:0004601">
    <property type="term" value="F:peroxidase activity"/>
    <property type="evidence" value="ECO:0007669"/>
    <property type="project" value="TreeGrafter"/>
</dbReference>
<dbReference type="GO" id="GO:0042744">
    <property type="term" value="P:hydrogen peroxide catabolic process"/>
    <property type="evidence" value="ECO:0007669"/>
    <property type="project" value="TreeGrafter"/>
</dbReference>
<dbReference type="CDD" id="cd08927">
    <property type="entry name" value="Hb-alpha-like"/>
    <property type="match status" value="1"/>
</dbReference>
<dbReference type="FunFam" id="1.10.490.10:FF:000002">
    <property type="entry name" value="Hemoglobin subunit alpha"/>
    <property type="match status" value="1"/>
</dbReference>
<dbReference type="Gene3D" id="1.10.490.10">
    <property type="entry name" value="Globins"/>
    <property type="match status" value="1"/>
</dbReference>
<dbReference type="InterPro" id="IPR000971">
    <property type="entry name" value="Globin"/>
</dbReference>
<dbReference type="InterPro" id="IPR009050">
    <property type="entry name" value="Globin-like_sf"/>
</dbReference>
<dbReference type="InterPro" id="IPR012292">
    <property type="entry name" value="Globin/Proto"/>
</dbReference>
<dbReference type="InterPro" id="IPR002338">
    <property type="entry name" value="Hemoglobin_a-typ"/>
</dbReference>
<dbReference type="InterPro" id="IPR050056">
    <property type="entry name" value="Hemoglobin_oxygen_transport"/>
</dbReference>
<dbReference type="InterPro" id="IPR002339">
    <property type="entry name" value="Hemoglobin_pi"/>
</dbReference>
<dbReference type="PANTHER" id="PTHR11442">
    <property type="entry name" value="HEMOGLOBIN FAMILY MEMBER"/>
    <property type="match status" value="1"/>
</dbReference>
<dbReference type="PANTHER" id="PTHR11442:SF48">
    <property type="entry name" value="HEMOGLOBIN SUBUNIT ALPHA"/>
    <property type="match status" value="1"/>
</dbReference>
<dbReference type="Pfam" id="PF00042">
    <property type="entry name" value="Globin"/>
    <property type="match status" value="1"/>
</dbReference>
<dbReference type="PRINTS" id="PR00612">
    <property type="entry name" value="ALPHAHAEM"/>
</dbReference>
<dbReference type="PRINTS" id="PR00815">
    <property type="entry name" value="PIHAEM"/>
</dbReference>
<dbReference type="SUPFAM" id="SSF46458">
    <property type="entry name" value="Globin-like"/>
    <property type="match status" value="1"/>
</dbReference>
<dbReference type="PROSITE" id="PS01033">
    <property type="entry name" value="GLOBIN"/>
    <property type="match status" value="1"/>
</dbReference>
<protein>
    <recommendedName>
        <fullName>Hemoglobin subunit alpha</fullName>
    </recommendedName>
    <alternativeName>
        <fullName>Alpha-globin</fullName>
    </alternativeName>
    <alternativeName>
        <fullName>Hemoglobin alpha chain</fullName>
    </alternativeName>
    <component>
        <recommendedName>
            <fullName evidence="2">Hemopressin</fullName>
        </recommendedName>
    </component>
</protein>
<name>HBA_HELMA</name>
<evidence type="ECO:0000250" key="1">
    <source>
        <dbReference type="UniProtKB" id="P01942"/>
    </source>
</evidence>
<evidence type="ECO:0000250" key="2">
    <source>
        <dbReference type="UniProtKB" id="P01946"/>
    </source>
</evidence>
<evidence type="ECO:0000250" key="3">
    <source>
        <dbReference type="UniProtKB" id="P18969"/>
    </source>
</evidence>
<evidence type="ECO:0000250" key="4">
    <source>
        <dbReference type="UniProtKB" id="P69905"/>
    </source>
</evidence>
<evidence type="ECO:0000255" key="5">
    <source>
        <dbReference type="PROSITE-ProRule" id="PRU00238"/>
    </source>
</evidence>
<reference key="1">
    <citation type="journal article" date="1987" name="Biol. Chem. Hoppe-Seyler">
        <title>The primary structure of the hemoglobin of Malayan sun bear (Helarctos malayanus, Carnivora) and structural comparison to other hemoglobin sequences.</title>
        <authorList>
            <person name="Hofmann O."/>
            <person name="Braunitzer G."/>
            <person name="Goltenboth R."/>
        </authorList>
    </citation>
    <scope>PROTEIN SEQUENCE OF 2-142</scope>
</reference>